<reference key="1">
    <citation type="journal article" date="1988" name="Proc. Natl. Acad. Sci. U.S.A.">
        <title>Molecular cloning and expression of the cDNA for the hamster alpha 1-adrenergic receptor.</title>
        <authorList>
            <person name="Cotecchia S."/>
            <person name="Schwinn D.A."/>
            <person name="Randall R.R."/>
            <person name="Lefkowitz R.J."/>
            <person name="Caron M.G."/>
            <person name="Kobilka B.K."/>
        </authorList>
    </citation>
    <scope>NUCLEOTIDE SEQUENCE [MRNA]</scope>
</reference>
<reference key="2">
    <citation type="journal article" date="1992" name="J. Biol. Chem.">
        <title>Constitutive activation of the alpha 1B-adrenergic receptor by all amino acid substitutions at a single site. Evidence for a region which constrains receptor activation.</title>
        <authorList>
            <person name="Kjelsberg M.A."/>
            <person name="Cotecchia S."/>
            <person name="Ostrowski J."/>
            <person name="Caron M.G."/>
            <person name="Lefkowitz R.J."/>
        </authorList>
    </citation>
    <scope>MUTAGENESIS OF ALA-293</scope>
</reference>
<organism>
    <name type="scientific">Mesocricetus auratus</name>
    <name type="common">Golden hamster</name>
    <dbReference type="NCBI Taxonomy" id="10036"/>
    <lineage>
        <taxon>Eukaryota</taxon>
        <taxon>Metazoa</taxon>
        <taxon>Chordata</taxon>
        <taxon>Craniata</taxon>
        <taxon>Vertebrata</taxon>
        <taxon>Euteleostomi</taxon>
        <taxon>Mammalia</taxon>
        <taxon>Eutheria</taxon>
        <taxon>Euarchontoglires</taxon>
        <taxon>Glires</taxon>
        <taxon>Rodentia</taxon>
        <taxon>Myomorpha</taxon>
        <taxon>Muroidea</taxon>
        <taxon>Cricetidae</taxon>
        <taxon>Cricetinae</taxon>
        <taxon>Mesocricetus</taxon>
    </lineage>
</organism>
<comment type="function">
    <text evidence="1">This alpha-adrenergic receptor mediates its action by association with G proteins that activate a phosphatidylinositol-calcium second messenger system. Its effect is mediated by G(q) and G(11) proteins. Nuclear ADRA1A-ADRA1B heterooligomers regulate phenylephrine (PE)-stimulated ERK signaling in cardiac myocytes (By similarity).</text>
</comment>
<comment type="subunit">
    <text evidence="2">Homo- and heterooligomer. Heterooligomerizes with ADRA1B homooligomers in cardiac myocytes. Interacts with CAVIN4.</text>
</comment>
<comment type="interaction">
    <interactant intactId="EBI-6391008">
        <id>P18841</id>
    </interactant>
    <interactant intactId="EBI-915544">
        <id>O35796</id>
        <label>C1qbp</label>
    </interactant>
    <organismsDiffer>true</organismsDiffer>
    <experiments>5</experiments>
</comment>
<comment type="subcellular location">
    <subcellularLocation>
        <location evidence="1">Nucleus membrane</location>
        <topology evidence="1">Multi-pass membrane protein</topology>
    </subcellularLocation>
    <subcellularLocation>
        <location evidence="2">Cell membrane</location>
        <topology evidence="4">Multi-pass membrane protein</topology>
    </subcellularLocation>
    <subcellularLocation>
        <location evidence="2">Cytoplasm</location>
    </subcellularLocation>
    <subcellularLocation>
        <location evidence="2">Membrane</location>
        <location evidence="2">Caveola</location>
    </subcellularLocation>
    <text evidence="1">Location at the nuclear membrane facilitates heterooligomerization and regulates ERK-mediated signaling in cardiac myocytes. Colocalizes with GNAQ, PLCB1 as well as LAP2 at the nuclear membrane of cardiac myocytes (By similarity).</text>
</comment>
<comment type="similarity">
    <text evidence="5">Belongs to the G-protein coupled receptor 1 family. Adrenergic receptor subfamily. ADRA1B sub-subfamily.</text>
</comment>
<keyword id="KW-1003">Cell membrane</keyword>
<keyword id="KW-0963">Cytoplasm</keyword>
<keyword id="KW-1015">Disulfide bond</keyword>
<keyword id="KW-0297">G-protein coupled receptor</keyword>
<keyword id="KW-0325">Glycoprotein</keyword>
<keyword id="KW-0449">Lipoprotein</keyword>
<keyword id="KW-0472">Membrane</keyword>
<keyword id="KW-0539">Nucleus</keyword>
<keyword id="KW-0564">Palmitate</keyword>
<keyword id="KW-0597">Phosphoprotein</keyword>
<keyword id="KW-0675">Receptor</keyword>
<keyword id="KW-1185">Reference proteome</keyword>
<keyword id="KW-0807">Transducer</keyword>
<keyword id="KW-0812">Transmembrane</keyword>
<keyword id="KW-1133">Transmembrane helix</keyword>
<proteinExistence type="evidence at protein level"/>
<sequence length="515" mass="56493">MNPDLDTGHNTSAPAQWGELKDANFTGPNQTSSNSTLPQLDVTRAISVGLVLGAFILFAIVGNILVILSVACNRHLRTPTNYFIVNLAIADLLLSFTVLPFSATLEVLGYWVLGRIFCDIWAAVDVLCCTASILSLCAISIDRYIGVRYSLQYPTLVTRRKAILALLSVWVLSTVISIGPLLGWKEPAPNDDKECGVTEEPFYALFSSLGSFYIPLAVILVMYCRVYIVAKRTTKNLEAGVMKEMSNSKELTLRIHSKNFHEDTLSSTKAKGHNPRSSIAVKLFKFSREKKAAKTLGIVVGMFILCWLPFFIALPLGSLFSTLKPPDAVFKVVFWLGYFNSCLNPIIYPCSSKEFKRAFMRILGCQCRSGRRRRRRRRLGACAYTYRPWTRGGSLERSQSRKDSLDDSGSCMSGSQRTLPSASPSPGYLGRGAQPPLELCAYPEWKSGALLSLPEPPGRRGRLDSGPLFTFKLLGEPESPGTEGDASNGGCDATTDLANGQPGFKSNMPLAPGHF</sequence>
<feature type="chain" id="PRO_0000069070" description="Alpha-1B adrenergic receptor">
    <location>
        <begin position="1"/>
        <end position="515"/>
    </location>
</feature>
<feature type="topological domain" description="Extracellular" evidence="1">
    <location>
        <begin position="1"/>
        <end position="45"/>
    </location>
</feature>
<feature type="transmembrane region" description="Helical; Name=1" evidence="1">
    <location>
        <begin position="46"/>
        <end position="70"/>
    </location>
</feature>
<feature type="topological domain" description="Cytoplasmic" evidence="1">
    <location>
        <begin position="71"/>
        <end position="83"/>
    </location>
</feature>
<feature type="transmembrane region" description="Helical; Name=2" evidence="1">
    <location>
        <begin position="84"/>
        <end position="105"/>
    </location>
</feature>
<feature type="topological domain" description="Extracellular" evidence="1">
    <location>
        <begin position="106"/>
        <end position="115"/>
    </location>
</feature>
<feature type="transmembrane region" description="Helical; Name=3" evidence="1">
    <location>
        <begin position="116"/>
        <end position="141"/>
    </location>
</feature>
<feature type="topological domain" description="Cytoplasmic" evidence="1">
    <location>
        <begin position="142"/>
        <end position="161"/>
    </location>
</feature>
<feature type="transmembrane region" description="Helical; Name=4" evidence="1">
    <location>
        <begin position="162"/>
        <end position="184"/>
    </location>
</feature>
<feature type="topological domain" description="Extracellular" evidence="1">
    <location>
        <begin position="185"/>
        <end position="201"/>
    </location>
</feature>
<feature type="transmembrane region" description="Helical; Name=5" evidence="1">
    <location>
        <begin position="202"/>
        <end position="224"/>
    </location>
</feature>
<feature type="topological domain" description="Cytoplasmic" evidence="1">
    <location>
        <begin position="225"/>
        <end position="295"/>
    </location>
</feature>
<feature type="transmembrane region" description="Helical; Name=6" evidence="1">
    <location>
        <begin position="296"/>
        <end position="319"/>
    </location>
</feature>
<feature type="topological domain" description="Extracellular" evidence="1">
    <location>
        <begin position="320"/>
        <end position="326"/>
    </location>
</feature>
<feature type="transmembrane region" description="Helical; Name=7" evidence="1">
    <location>
        <begin position="327"/>
        <end position="351"/>
    </location>
</feature>
<feature type="topological domain" description="Cytoplasmic" evidence="1">
    <location>
        <begin position="352"/>
        <end position="515"/>
    </location>
</feature>
<feature type="region of interest" description="Disordered" evidence="6">
    <location>
        <begin position="392"/>
        <end position="428"/>
    </location>
</feature>
<feature type="region of interest" description="Disordered" evidence="6">
    <location>
        <begin position="473"/>
        <end position="515"/>
    </location>
</feature>
<feature type="short sequence motif" description="Nuclear localization signal" evidence="1">
    <location>
        <begin position="368"/>
        <end position="378"/>
    </location>
</feature>
<feature type="compositionally biased region" description="Polar residues" evidence="6">
    <location>
        <begin position="410"/>
        <end position="424"/>
    </location>
</feature>
<feature type="modified residue" description="Phosphothreonine" evidence="3">
    <location>
        <position position="264"/>
    </location>
</feature>
<feature type="lipid moiety-binding region" description="S-palmitoyl cysteine" evidence="4">
    <location>
        <position position="365"/>
    </location>
</feature>
<feature type="glycosylation site" description="N-linked (GlcNAc...) asparagine" evidence="4">
    <location>
        <position position="10"/>
    </location>
</feature>
<feature type="glycosylation site" description="N-linked (GlcNAc...) asparagine" evidence="4">
    <location>
        <position position="24"/>
    </location>
</feature>
<feature type="glycosylation site" description="N-linked (GlcNAc...) asparagine" evidence="4">
    <location>
        <position position="34"/>
    </location>
</feature>
<feature type="disulfide bond" evidence="5">
    <location>
        <begin position="118"/>
        <end position="195"/>
    </location>
</feature>
<feature type="mutagenesis site" description="Confers constitutive activity." evidence="7">
    <original>A</original>
    <variation>X</variation>
    <location>
        <position position="293"/>
    </location>
</feature>
<dbReference type="EMBL" id="J04084">
    <property type="protein sequence ID" value="AAA58964.1"/>
    <property type="molecule type" value="mRNA"/>
</dbReference>
<dbReference type="PIR" id="A40491">
    <property type="entry name" value="A40491"/>
</dbReference>
<dbReference type="RefSeq" id="NP_001268623.1">
    <property type="nucleotide sequence ID" value="NM_001281694.1"/>
</dbReference>
<dbReference type="SMR" id="P18841"/>
<dbReference type="IntAct" id="P18841">
    <property type="interactions" value="1"/>
</dbReference>
<dbReference type="STRING" id="10036.ENSMAUP00000012911"/>
<dbReference type="BindingDB" id="P18841"/>
<dbReference type="ChEMBL" id="CHEMBL3122"/>
<dbReference type="DrugCentral" id="P18841"/>
<dbReference type="GlyCosmos" id="P18841">
    <property type="glycosylation" value="3 sites, No reported glycans"/>
</dbReference>
<dbReference type="iPTMnet" id="P18841"/>
<dbReference type="GeneID" id="101843941"/>
<dbReference type="KEGG" id="maua:101843941"/>
<dbReference type="CTD" id="147"/>
<dbReference type="eggNOG" id="KOG3656">
    <property type="taxonomic scope" value="Eukaryota"/>
</dbReference>
<dbReference type="OrthoDB" id="5977853at2759"/>
<dbReference type="PRO" id="PR:P18841"/>
<dbReference type="Proteomes" id="UP000189706">
    <property type="component" value="Unplaced"/>
</dbReference>
<dbReference type="GO" id="GO:0005901">
    <property type="term" value="C:caveola"/>
    <property type="evidence" value="ECO:0007669"/>
    <property type="project" value="UniProtKB-SubCell"/>
</dbReference>
<dbReference type="GO" id="GO:0005737">
    <property type="term" value="C:cytoplasm"/>
    <property type="evidence" value="ECO:0000250"/>
    <property type="project" value="UniProtKB"/>
</dbReference>
<dbReference type="GO" id="GO:0031965">
    <property type="term" value="C:nuclear membrane"/>
    <property type="evidence" value="ECO:0000250"/>
    <property type="project" value="UniProtKB"/>
</dbReference>
<dbReference type="GO" id="GO:0005634">
    <property type="term" value="C:nucleus"/>
    <property type="evidence" value="ECO:0000250"/>
    <property type="project" value="UniProtKB"/>
</dbReference>
<dbReference type="GO" id="GO:0005886">
    <property type="term" value="C:plasma membrane"/>
    <property type="evidence" value="ECO:0000250"/>
    <property type="project" value="UniProtKB"/>
</dbReference>
<dbReference type="GO" id="GO:0004937">
    <property type="term" value="F:alpha1-adrenergic receptor activity"/>
    <property type="evidence" value="ECO:0007669"/>
    <property type="project" value="InterPro"/>
</dbReference>
<dbReference type="GO" id="GO:0046982">
    <property type="term" value="F:protein heterodimerization activity"/>
    <property type="evidence" value="ECO:0000250"/>
    <property type="project" value="UniProtKB"/>
</dbReference>
<dbReference type="GO" id="GO:0071880">
    <property type="term" value="P:adenylate cyclase-activating adrenergic receptor signaling pathway"/>
    <property type="evidence" value="ECO:0007669"/>
    <property type="project" value="TreeGrafter"/>
</dbReference>
<dbReference type="GO" id="GO:0007267">
    <property type="term" value="P:cell-cell signaling"/>
    <property type="evidence" value="ECO:0007669"/>
    <property type="project" value="TreeGrafter"/>
</dbReference>
<dbReference type="GO" id="GO:0007200">
    <property type="term" value="P:phospholipase C-activating G protein-coupled receptor signaling pathway"/>
    <property type="evidence" value="ECO:0007669"/>
    <property type="project" value="TreeGrafter"/>
</dbReference>
<dbReference type="GO" id="GO:0007204">
    <property type="term" value="P:positive regulation of cytosolic calcium ion concentration"/>
    <property type="evidence" value="ECO:0007669"/>
    <property type="project" value="TreeGrafter"/>
</dbReference>
<dbReference type="GO" id="GO:0043410">
    <property type="term" value="P:positive regulation of MAPK cascade"/>
    <property type="evidence" value="ECO:0000250"/>
    <property type="project" value="UniProtKB"/>
</dbReference>
<dbReference type="GO" id="GO:0055117">
    <property type="term" value="P:regulation of cardiac muscle contraction"/>
    <property type="evidence" value="ECO:0007669"/>
    <property type="project" value="InterPro"/>
</dbReference>
<dbReference type="GO" id="GO:0019229">
    <property type="term" value="P:regulation of vasoconstriction"/>
    <property type="evidence" value="ECO:0007669"/>
    <property type="project" value="InterPro"/>
</dbReference>
<dbReference type="CDD" id="cd15326">
    <property type="entry name" value="7tmA_alpha1B_AR"/>
    <property type="match status" value="1"/>
</dbReference>
<dbReference type="FunFam" id="1.20.1070.10:FF:000027">
    <property type="entry name" value="alpha-1A adrenergic receptor"/>
    <property type="match status" value="1"/>
</dbReference>
<dbReference type="Gene3D" id="1.20.1070.10">
    <property type="entry name" value="Rhodopsin 7-helix transmembrane proteins"/>
    <property type="match status" value="1"/>
</dbReference>
<dbReference type="InterPro" id="IPR002233">
    <property type="entry name" value="ADR_fam"/>
</dbReference>
<dbReference type="InterPro" id="IPR001115">
    <property type="entry name" value="ADRA1B_rcpt"/>
</dbReference>
<dbReference type="InterPro" id="IPR000276">
    <property type="entry name" value="GPCR_Rhodpsn"/>
</dbReference>
<dbReference type="InterPro" id="IPR017452">
    <property type="entry name" value="GPCR_Rhodpsn_7TM"/>
</dbReference>
<dbReference type="PANTHER" id="PTHR24248">
    <property type="entry name" value="ADRENERGIC RECEPTOR-RELATED G-PROTEIN COUPLED RECEPTOR"/>
    <property type="match status" value="1"/>
</dbReference>
<dbReference type="PANTHER" id="PTHR24248:SF17">
    <property type="entry name" value="ALPHA-1B ADRENERGIC RECEPTOR"/>
    <property type="match status" value="1"/>
</dbReference>
<dbReference type="Pfam" id="PF00001">
    <property type="entry name" value="7tm_1"/>
    <property type="match status" value="1"/>
</dbReference>
<dbReference type="PRINTS" id="PR01103">
    <property type="entry name" value="ADRENERGICR"/>
</dbReference>
<dbReference type="PRINTS" id="PR00556">
    <property type="entry name" value="ADRENRGCA1BR"/>
</dbReference>
<dbReference type="PRINTS" id="PR00237">
    <property type="entry name" value="GPCRRHODOPSN"/>
</dbReference>
<dbReference type="SMART" id="SM01381">
    <property type="entry name" value="7TM_GPCR_Srsx"/>
    <property type="match status" value="1"/>
</dbReference>
<dbReference type="SUPFAM" id="SSF81321">
    <property type="entry name" value="Family A G protein-coupled receptor-like"/>
    <property type="match status" value="1"/>
</dbReference>
<dbReference type="PROSITE" id="PS00237">
    <property type="entry name" value="G_PROTEIN_RECEP_F1_1"/>
    <property type="match status" value="1"/>
</dbReference>
<dbReference type="PROSITE" id="PS50262">
    <property type="entry name" value="G_PROTEIN_RECEP_F1_2"/>
    <property type="match status" value="1"/>
</dbReference>
<evidence type="ECO:0000250" key="1"/>
<evidence type="ECO:0000250" key="2">
    <source>
        <dbReference type="UniProtKB" id="P35368"/>
    </source>
</evidence>
<evidence type="ECO:0000250" key="3">
    <source>
        <dbReference type="UniProtKB" id="P97717"/>
    </source>
</evidence>
<evidence type="ECO:0000255" key="4"/>
<evidence type="ECO:0000255" key="5">
    <source>
        <dbReference type="PROSITE-ProRule" id="PRU00521"/>
    </source>
</evidence>
<evidence type="ECO:0000256" key="6">
    <source>
        <dbReference type="SAM" id="MobiDB-lite"/>
    </source>
</evidence>
<evidence type="ECO:0000269" key="7">
    <source>
    </source>
</evidence>
<name>ADA1B_MESAU</name>
<protein>
    <recommendedName>
        <fullName>Alpha-1B adrenergic receptor</fullName>
    </recommendedName>
    <alternativeName>
        <fullName>Alpha-1B adrenoreceptor</fullName>
        <shortName>Alpha-1B adrenoceptor</shortName>
    </alternativeName>
</protein>
<gene>
    <name type="primary">ADRA1B</name>
</gene>
<accession>P18841</accession>